<reference key="1">
    <citation type="journal article" date="2007" name="PLoS Genet.">
        <title>Patterns and implications of gene gain and loss in the evolution of Prochlorococcus.</title>
        <authorList>
            <person name="Kettler G.C."/>
            <person name="Martiny A.C."/>
            <person name="Huang K."/>
            <person name="Zucker J."/>
            <person name="Coleman M.L."/>
            <person name="Rodrigue S."/>
            <person name="Chen F."/>
            <person name="Lapidus A."/>
            <person name="Ferriera S."/>
            <person name="Johnson J."/>
            <person name="Steglich C."/>
            <person name="Church G.M."/>
            <person name="Richardson P."/>
            <person name="Chisholm S.W."/>
        </authorList>
    </citation>
    <scope>NUCLEOTIDE SEQUENCE [LARGE SCALE GENOMIC DNA]</scope>
    <source>
        <strain>MIT 9301</strain>
    </source>
</reference>
<feature type="chain" id="PRO_1000050738" description="Large ribosomal subunit protein bL35">
    <location>
        <begin position="1"/>
        <end position="65"/>
    </location>
</feature>
<gene>
    <name evidence="1" type="primary">rpmI</name>
    <name evidence="1" type="synonym">rpl35</name>
    <name type="ordered locus">P9301_18511</name>
</gene>
<evidence type="ECO:0000255" key="1">
    <source>
        <dbReference type="HAMAP-Rule" id="MF_00514"/>
    </source>
</evidence>
<evidence type="ECO:0000305" key="2"/>
<sequence>MSKLKTRKSAAKRFKATATGKFMRRRAFHNHLLDHKSSKLKRHLSTKAVVDERDADNVKLMIPYA</sequence>
<proteinExistence type="inferred from homology"/>
<name>RL35_PROM0</name>
<accession>A3PFE9</accession>
<protein>
    <recommendedName>
        <fullName evidence="1">Large ribosomal subunit protein bL35</fullName>
    </recommendedName>
    <alternativeName>
        <fullName evidence="2">50S ribosomal protein L35</fullName>
    </alternativeName>
</protein>
<keyword id="KW-1185">Reference proteome</keyword>
<keyword id="KW-0687">Ribonucleoprotein</keyword>
<keyword id="KW-0689">Ribosomal protein</keyword>
<comment type="similarity">
    <text evidence="1">Belongs to the bacterial ribosomal protein bL35 family.</text>
</comment>
<dbReference type="EMBL" id="CP000576">
    <property type="protein sequence ID" value="ABO18474.1"/>
    <property type="molecule type" value="Genomic_DNA"/>
</dbReference>
<dbReference type="RefSeq" id="WP_002806185.1">
    <property type="nucleotide sequence ID" value="NC_009091.1"/>
</dbReference>
<dbReference type="SMR" id="A3PFE9"/>
<dbReference type="STRING" id="167546.P9301_18511"/>
<dbReference type="KEGG" id="pmg:P9301_18511"/>
<dbReference type="eggNOG" id="COG0291">
    <property type="taxonomic scope" value="Bacteria"/>
</dbReference>
<dbReference type="HOGENOM" id="CLU_169643_4_0_3"/>
<dbReference type="OrthoDB" id="47476at2"/>
<dbReference type="Proteomes" id="UP000001430">
    <property type="component" value="Chromosome"/>
</dbReference>
<dbReference type="GO" id="GO:0022625">
    <property type="term" value="C:cytosolic large ribosomal subunit"/>
    <property type="evidence" value="ECO:0007669"/>
    <property type="project" value="TreeGrafter"/>
</dbReference>
<dbReference type="GO" id="GO:0003735">
    <property type="term" value="F:structural constituent of ribosome"/>
    <property type="evidence" value="ECO:0007669"/>
    <property type="project" value="InterPro"/>
</dbReference>
<dbReference type="GO" id="GO:0006412">
    <property type="term" value="P:translation"/>
    <property type="evidence" value="ECO:0007669"/>
    <property type="project" value="UniProtKB-UniRule"/>
</dbReference>
<dbReference type="FunFam" id="4.10.410.60:FF:000001">
    <property type="entry name" value="50S ribosomal protein L35"/>
    <property type="match status" value="1"/>
</dbReference>
<dbReference type="Gene3D" id="4.10.410.60">
    <property type="match status" value="1"/>
</dbReference>
<dbReference type="HAMAP" id="MF_00514">
    <property type="entry name" value="Ribosomal_bL35"/>
    <property type="match status" value="1"/>
</dbReference>
<dbReference type="InterPro" id="IPR001706">
    <property type="entry name" value="Ribosomal_bL35"/>
</dbReference>
<dbReference type="InterPro" id="IPR021137">
    <property type="entry name" value="Ribosomal_bL35-like"/>
</dbReference>
<dbReference type="InterPro" id="IPR018265">
    <property type="entry name" value="Ribosomal_bL35_CS"/>
</dbReference>
<dbReference type="InterPro" id="IPR037229">
    <property type="entry name" value="Ribosomal_bL35_sf"/>
</dbReference>
<dbReference type="NCBIfam" id="TIGR00001">
    <property type="entry name" value="rpmI_bact"/>
    <property type="match status" value="1"/>
</dbReference>
<dbReference type="PANTHER" id="PTHR33343">
    <property type="entry name" value="54S RIBOSOMAL PROTEIN BL35M"/>
    <property type="match status" value="1"/>
</dbReference>
<dbReference type="PANTHER" id="PTHR33343:SF1">
    <property type="entry name" value="LARGE RIBOSOMAL SUBUNIT PROTEIN BL35M"/>
    <property type="match status" value="1"/>
</dbReference>
<dbReference type="Pfam" id="PF01632">
    <property type="entry name" value="Ribosomal_L35p"/>
    <property type="match status" value="1"/>
</dbReference>
<dbReference type="PRINTS" id="PR00064">
    <property type="entry name" value="RIBOSOMALL35"/>
</dbReference>
<dbReference type="SUPFAM" id="SSF143034">
    <property type="entry name" value="L35p-like"/>
    <property type="match status" value="1"/>
</dbReference>
<dbReference type="PROSITE" id="PS00936">
    <property type="entry name" value="RIBOSOMAL_L35"/>
    <property type="match status" value="1"/>
</dbReference>
<organism>
    <name type="scientific">Prochlorococcus marinus (strain MIT 9301)</name>
    <dbReference type="NCBI Taxonomy" id="167546"/>
    <lineage>
        <taxon>Bacteria</taxon>
        <taxon>Bacillati</taxon>
        <taxon>Cyanobacteriota</taxon>
        <taxon>Cyanophyceae</taxon>
        <taxon>Synechococcales</taxon>
        <taxon>Prochlorococcaceae</taxon>
        <taxon>Prochlorococcus</taxon>
    </lineage>
</organism>